<dbReference type="EMBL" id="BA000030">
    <property type="protein sequence ID" value="BAC72637.1"/>
    <property type="molecule type" value="Genomic_DNA"/>
</dbReference>
<dbReference type="RefSeq" id="WP_003948644.1">
    <property type="nucleotide sequence ID" value="NZ_JZJK01000077.1"/>
</dbReference>
<dbReference type="SMR" id="P66338"/>
<dbReference type="GeneID" id="97760369"/>
<dbReference type="KEGG" id="sma:SAVERM_4925"/>
<dbReference type="eggNOG" id="COG0051">
    <property type="taxonomic scope" value="Bacteria"/>
</dbReference>
<dbReference type="HOGENOM" id="CLU_122625_1_3_11"/>
<dbReference type="OrthoDB" id="9804464at2"/>
<dbReference type="Proteomes" id="UP000000428">
    <property type="component" value="Chromosome"/>
</dbReference>
<dbReference type="GO" id="GO:1990904">
    <property type="term" value="C:ribonucleoprotein complex"/>
    <property type="evidence" value="ECO:0007669"/>
    <property type="project" value="UniProtKB-KW"/>
</dbReference>
<dbReference type="GO" id="GO:0005840">
    <property type="term" value="C:ribosome"/>
    <property type="evidence" value="ECO:0007669"/>
    <property type="project" value="UniProtKB-KW"/>
</dbReference>
<dbReference type="GO" id="GO:0003735">
    <property type="term" value="F:structural constituent of ribosome"/>
    <property type="evidence" value="ECO:0007669"/>
    <property type="project" value="InterPro"/>
</dbReference>
<dbReference type="GO" id="GO:0000049">
    <property type="term" value="F:tRNA binding"/>
    <property type="evidence" value="ECO:0007669"/>
    <property type="project" value="UniProtKB-UniRule"/>
</dbReference>
<dbReference type="GO" id="GO:0006412">
    <property type="term" value="P:translation"/>
    <property type="evidence" value="ECO:0007669"/>
    <property type="project" value="UniProtKB-UniRule"/>
</dbReference>
<dbReference type="FunFam" id="3.30.70.600:FF:000001">
    <property type="entry name" value="30S ribosomal protein S10"/>
    <property type="match status" value="1"/>
</dbReference>
<dbReference type="Gene3D" id="3.30.70.600">
    <property type="entry name" value="Ribosomal protein S10 domain"/>
    <property type="match status" value="1"/>
</dbReference>
<dbReference type="HAMAP" id="MF_00508">
    <property type="entry name" value="Ribosomal_uS10"/>
    <property type="match status" value="1"/>
</dbReference>
<dbReference type="InterPro" id="IPR001848">
    <property type="entry name" value="Ribosomal_uS10"/>
</dbReference>
<dbReference type="InterPro" id="IPR018268">
    <property type="entry name" value="Ribosomal_uS10_CS"/>
</dbReference>
<dbReference type="InterPro" id="IPR027486">
    <property type="entry name" value="Ribosomal_uS10_dom"/>
</dbReference>
<dbReference type="InterPro" id="IPR036838">
    <property type="entry name" value="Ribosomal_uS10_dom_sf"/>
</dbReference>
<dbReference type="NCBIfam" id="NF001861">
    <property type="entry name" value="PRK00596.1"/>
    <property type="match status" value="1"/>
</dbReference>
<dbReference type="NCBIfam" id="TIGR01049">
    <property type="entry name" value="rpsJ_bact"/>
    <property type="match status" value="1"/>
</dbReference>
<dbReference type="PANTHER" id="PTHR11700">
    <property type="entry name" value="30S RIBOSOMAL PROTEIN S10 FAMILY MEMBER"/>
    <property type="match status" value="1"/>
</dbReference>
<dbReference type="Pfam" id="PF00338">
    <property type="entry name" value="Ribosomal_S10"/>
    <property type="match status" value="1"/>
</dbReference>
<dbReference type="PRINTS" id="PR00971">
    <property type="entry name" value="RIBOSOMALS10"/>
</dbReference>
<dbReference type="SMART" id="SM01403">
    <property type="entry name" value="Ribosomal_S10"/>
    <property type="match status" value="1"/>
</dbReference>
<dbReference type="SUPFAM" id="SSF54999">
    <property type="entry name" value="Ribosomal protein S10"/>
    <property type="match status" value="1"/>
</dbReference>
<dbReference type="PROSITE" id="PS00361">
    <property type="entry name" value="RIBOSOMAL_S10"/>
    <property type="match status" value="1"/>
</dbReference>
<reference key="1">
    <citation type="journal article" date="2001" name="Proc. Natl. Acad. Sci. U.S.A.">
        <title>Genome sequence of an industrial microorganism Streptomyces avermitilis: deducing the ability of producing secondary metabolites.</title>
        <authorList>
            <person name="Omura S."/>
            <person name="Ikeda H."/>
            <person name="Ishikawa J."/>
            <person name="Hanamoto A."/>
            <person name="Takahashi C."/>
            <person name="Shinose M."/>
            <person name="Takahashi Y."/>
            <person name="Horikawa H."/>
            <person name="Nakazawa H."/>
            <person name="Osonoe T."/>
            <person name="Kikuchi H."/>
            <person name="Shiba T."/>
            <person name="Sakaki Y."/>
            <person name="Hattori M."/>
        </authorList>
    </citation>
    <scope>NUCLEOTIDE SEQUENCE [LARGE SCALE GENOMIC DNA]</scope>
    <source>
        <strain>ATCC 31267 / DSM 46492 / JCM 5070 / NBRC 14893 / NCIMB 12804 / NRRL 8165 / MA-4680</strain>
    </source>
</reference>
<reference key="2">
    <citation type="journal article" date="2003" name="Nat. Biotechnol.">
        <title>Complete genome sequence and comparative analysis of the industrial microorganism Streptomyces avermitilis.</title>
        <authorList>
            <person name="Ikeda H."/>
            <person name="Ishikawa J."/>
            <person name="Hanamoto A."/>
            <person name="Shinose M."/>
            <person name="Kikuchi H."/>
            <person name="Shiba T."/>
            <person name="Sakaki Y."/>
            <person name="Hattori M."/>
            <person name="Omura S."/>
        </authorList>
    </citation>
    <scope>NUCLEOTIDE SEQUENCE [LARGE SCALE GENOMIC DNA]</scope>
    <source>
        <strain>ATCC 31267 / DSM 46492 / JCM 5070 / NBRC 14893 / NCIMB 12804 / NRRL 8165 / MA-4680</strain>
    </source>
</reference>
<name>RS10_STRAW</name>
<proteinExistence type="inferred from homology"/>
<keyword id="KW-1185">Reference proteome</keyword>
<keyword id="KW-0687">Ribonucleoprotein</keyword>
<keyword id="KW-0689">Ribosomal protein</keyword>
<accession>P66338</accession>
<accession>Q9L0E1</accession>
<evidence type="ECO:0000255" key="1">
    <source>
        <dbReference type="HAMAP-Rule" id="MF_00508"/>
    </source>
</evidence>
<evidence type="ECO:0000305" key="2"/>
<feature type="chain" id="PRO_0000146605" description="Small ribosomal subunit protein uS10">
    <location>
        <begin position="1"/>
        <end position="102"/>
    </location>
</feature>
<comment type="function">
    <text evidence="1">Involved in the binding of tRNA to the ribosomes.</text>
</comment>
<comment type="subunit">
    <text evidence="1">Part of the 30S ribosomal subunit.</text>
</comment>
<comment type="similarity">
    <text evidence="1">Belongs to the universal ribosomal protein uS10 family.</text>
</comment>
<protein>
    <recommendedName>
        <fullName evidence="1">Small ribosomal subunit protein uS10</fullName>
    </recommendedName>
    <alternativeName>
        <fullName evidence="2">30S ribosomal protein S10</fullName>
    </alternativeName>
</protein>
<sequence>MAGQKIRIRLKAYDHEVIDSSAKKIVETVTRTGASVAGPVPLPTEKNVYCVIKSPHKYKDSREHFEMRTHKRLIDILDPTPKTVDSLMRLDLPAGVDIEIKL</sequence>
<gene>
    <name evidence="1" type="primary">rpsJ</name>
    <name type="ordered locus">SAV_4925</name>
</gene>
<organism>
    <name type="scientific">Streptomyces avermitilis (strain ATCC 31267 / DSM 46492 / JCM 5070 / NBRC 14893 / NCIMB 12804 / NRRL 8165 / MA-4680)</name>
    <dbReference type="NCBI Taxonomy" id="227882"/>
    <lineage>
        <taxon>Bacteria</taxon>
        <taxon>Bacillati</taxon>
        <taxon>Actinomycetota</taxon>
        <taxon>Actinomycetes</taxon>
        <taxon>Kitasatosporales</taxon>
        <taxon>Streptomycetaceae</taxon>
        <taxon>Streptomyces</taxon>
    </lineage>
</organism>